<name>COAE_ECOL6</name>
<sequence length="206" mass="22676">MRYIVALTGGIGSGKSTVANAFADLGINVIDADIIARQVVEPGAPALHAIADHFGANMIAADGTLQRRALRERIFANPEEKNWLNALLHPLIQQETQHQIQRATSPYVLWVVPLLVENSLYKKANRVLVVDVSPETQLKRTMQRDDVTREHVEQILAAQATREARLAVADDVIDNNGAPDAIASDVARLHAYYLQLASQFVSQEKP</sequence>
<reference key="1">
    <citation type="journal article" date="2002" name="Proc. Natl. Acad. Sci. U.S.A.">
        <title>Extensive mosaic structure revealed by the complete genome sequence of uropathogenic Escherichia coli.</title>
        <authorList>
            <person name="Welch R.A."/>
            <person name="Burland V."/>
            <person name="Plunkett G. III"/>
            <person name="Redford P."/>
            <person name="Roesch P."/>
            <person name="Rasko D."/>
            <person name="Buckles E.L."/>
            <person name="Liou S.-R."/>
            <person name="Boutin A."/>
            <person name="Hackett J."/>
            <person name="Stroud D."/>
            <person name="Mayhew G.F."/>
            <person name="Rose D.J."/>
            <person name="Zhou S."/>
            <person name="Schwartz D.C."/>
            <person name="Perna N.T."/>
            <person name="Mobley H.L.T."/>
            <person name="Donnenberg M.S."/>
            <person name="Blattner F.R."/>
        </authorList>
    </citation>
    <scope>NUCLEOTIDE SEQUENCE [LARGE SCALE GENOMIC DNA]</scope>
    <source>
        <strain>CFT073 / ATCC 700928 / UPEC</strain>
    </source>
</reference>
<evidence type="ECO:0000255" key="1">
    <source>
        <dbReference type="HAMAP-Rule" id="MF_00376"/>
    </source>
</evidence>
<feature type="chain" id="PRO_0000172942" description="Dephospho-CoA kinase">
    <location>
        <begin position="1"/>
        <end position="206"/>
    </location>
</feature>
<feature type="domain" description="DPCK" evidence="1">
    <location>
        <begin position="4"/>
        <end position="200"/>
    </location>
</feature>
<feature type="binding site" evidence="1">
    <location>
        <begin position="12"/>
        <end position="17"/>
    </location>
    <ligand>
        <name>ATP</name>
        <dbReference type="ChEBI" id="CHEBI:30616"/>
    </ligand>
</feature>
<comment type="function">
    <text evidence="1">Catalyzes the phosphorylation of the 3'-hydroxyl group of dephosphocoenzyme A to form coenzyme A.</text>
</comment>
<comment type="catalytic activity">
    <reaction evidence="1">
        <text>3'-dephospho-CoA + ATP = ADP + CoA + H(+)</text>
        <dbReference type="Rhea" id="RHEA:18245"/>
        <dbReference type="ChEBI" id="CHEBI:15378"/>
        <dbReference type="ChEBI" id="CHEBI:30616"/>
        <dbReference type="ChEBI" id="CHEBI:57287"/>
        <dbReference type="ChEBI" id="CHEBI:57328"/>
        <dbReference type="ChEBI" id="CHEBI:456216"/>
        <dbReference type="EC" id="2.7.1.24"/>
    </reaction>
</comment>
<comment type="pathway">
    <text evidence="1">Cofactor biosynthesis; coenzyme A biosynthesis; CoA from (R)-pantothenate: step 5/5.</text>
</comment>
<comment type="subcellular location">
    <subcellularLocation>
        <location evidence="1">Cytoplasm</location>
    </subcellularLocation>
</comment>
<comment type="similarity">
    <text evidence="1">Belongs to the CoaE family.</text>
</comment>
<accession>Q8FL55</accession>
<organism>
    <name type="scientific">Escherichia coli O6:H1 (strain CFT073 / ATCC 700928 / UPEC)</name>
    <dbReference type="NCBI Taxonomy" id="199310"/>
    <lineage>
        <taxon>Bacteria</taxon>
        <taxon>Pseudomonadati</taxon>
        <taxon>Pseudomonadota</taxon>
        <taxon>Gammaproteobacteria</taxon>
        <taxon>Enterobacterales</taxon>
        <taxon>Enterobacteriaceae</taxon>
        <taxon>Escherichia</taxon>
    </lineage>
</organism>
<gene>
    <name evidence="1" type="primary">coaE</name>
    <name type="ordered locus">c0123</name>
</gene>
<keyword id="KW-0067">ATP-binding</keyword>
<keyword id="KW-0173">Coenzyme A biosynthesis</keyword>
<keyword id="KW-0963">Cytoplasm</keyword>
<keyword id="KW-0418">Kinase</keyword>
<keyword id="KW-0547">Nucleotide-binding</keyword>
<keyword id="KW-1185">Reference proteome</keyword>
<keyword id="KW-0808">Transferase</keyword>
<proteinExistence type="inferred from homology"/>
<protein>
    <recommendedName>
        <fullName evidence="1">Dephospho-CoA kinase</fullName>
        <ecNumber evidence="1">2.7.1.24</ecNumber>
    </recommendedName>
    <alternativeName>
        <fullName evidence="1">Dephosphocoenzyme A kinase</fullName>
    </alternativeName>
</protein>
<dbReference type="EC" id="2.7.1.24" evidence="1"/>
<dbReference type="EMBL" id="AE014075">
    <property type="protein sequence ID" value="AAN78621.1"/>
    <property type="molecule type" value="Genomic_DNA"/>
</dbReference>
<dbReference type="RefSeq" id="WP_001269525.1">
    <property type="nucleotide sequence ID" value="NZ_CP051263.1"/>
</dbReference>
<dbReference type="SMR" id="Q8FL55"/>
<dbReference type="STRING" id="199310.c0123"/>
<dbReference type="KEGG" id="ecc:c0123"/>
<dbReference type="eggNOG" id="COG0237">
    <property type="taxonomic scope" value="Bacteria"/>
</dbReference>
<dbReference type="HOGENOM" id="CLU_057180_1_2_6"/>
<dbReference type="BioCyc" id="ECOL199310:C0123-MONOMER"/>
<dbReference type="UniPathway" id="UPA00241">
    <property type="reaction ID" value="UER00356"/>
</dbReference>
<dbReference type="Proteomes" id="UP000001410">
    <property type="component" value="Chromosome"/>
</dbReference>
<dbReference type="GO" id="GO:0005737">
    <property type="term" value="C:cytoplasm"/>
    <property type="evidence" value="ECO:0007669"/>
    <property type="project" value="UniProtKB-SubCell"/>
</dbReference>
<dbReference type="GO" id="GO:0005524">
    <property type="term" value="F:ATP binding"/>
    <property type="evidence" value="ECO:0007669"/>
    <property type="project" value="UniProtKB-UniRule"/>
</dbReference>
<dbReference type="GO" id="GO:0004140">
    <property type="term" value="F:dephospho-CoA kinase activity"/>
    <property type="evidence" value="ECO:0007669"/>
    <property type="project" value="UniProtKB-UniRule"/>
</dbReference>
<dbReference type="GO" id="GO:0015937">
    <property type="term" value="P:coenzyme A biosynthetic process"/>
    <property type="evidence" value="ECO:0007669"/>
    <property type="project" value="UniProtKB-UniRule"/>
</dbReference>
<dbReference type="CDD" id="cd02022">
    <property type="entry name" value="DPCK"/>
    <property type="match status" value="1"/>
</dbReference>
<dbReference type="FunFam" id="3.40.50.300:FF:000518">
    <property type="entry name" value="Dephospho-CoA kinase"/>
    <property type="match status" value="1"/>
</dbReference>
<dbReference type="Gene3D" id="3.40.50.300">
    <property type="entry name" value="P-loop containing nucleotide triphosphate hydrolases"/>
    <property type="match status" value="1"/>
</dbReference>
<dbReference type="HAMAP" id="MF_00376">
    <property type="entry name" value="Dephospho_CoA_kinase"/>
    <property type="match status" value="1"/>
</dbReference>
<dbReference type="InterPro" id="IPR001977">
    <property type="entry name" value="Depp_CoAkinase"/>
</dbReference>
<dbReference type="InterPro" id="IPR027417">
    <property type="entry name" value="P-loop_NTPase"/>
</dbReference>
<dbReference type="NCBIfam" id="TIGR00152">
    <property type="entry name" value="dephospho-CoA kinase"/>
    <property type="match status" value="1"/>
</dbReference>
<dbReference type="PANTHER" id="PTHR10695:SF46">
    <property type="entry name" value="BIFUNCTIONAL COENZYME A SYNTHASE-RELATED"/>
    <property type="match status" value="1"/>
</dbReference>
<dbReference type="PANTHER" id="PTHR10695">
    <property type="entry name" value="DEPHOSPHO-COA KINASE-RELATED"/>
    <property type="match status" value="1"/>
</dbReference>
<dbReference type="Pfam" id="PF01121">
    <property type="entry name" value="CoaE"/>
    <property type="match status" value="1"/>
</dbReference>
<dbReference type="SUPFAM" id="SSF52540">
    <property type="entry name" value="P-loop containing nucleoside triphosphate hydrolases"/>
    <property type="match status" value="1"/>
</dbReference>
<dbReference type="PROSITE" id="PS51219">
    <property type="entry name" value="DPCK"/>
    <property type="match status" value="1"/>
</dbReference>